<evidence type="ECO:0000255" key="1"/>
<evidence type="ECO:0000305" key="2"/>
<proteinExistence type="inferred from homology"/>
<dbReference type="EMBL" id="U38804">
    <property type="protein sequence ID" value="AAC08075.1"/>
    <property type="molecule type" value="Genomic_DNA"/>
</dbReference>
<dbReference type="PIR" id="S73110">
    <property type="entry name" value="S73110"/>
</dbReference>
<dbReference type="RefSeq" id="NP_053799.1">
    <property type="nucleotide sequence ID" value="NC_000925.1"/>
</dbReference>
<dbReference type="SMR" id="P51189"/>
<dbReference type="GeneID" id="809812"/>
<dbReference type="GO" id="GO:0009507">
    <property type="term" value="C:chloroplast"/>
    <property type="evidence" value="ECO:0007669"/>
    <property type="project" value="UniProtKB-SubCell"/>
</dbReference>
<dbReference type="GO" id="GO:0005524">
    <property type="term" value="F:ATP binding"/>
    <property type="evidence" value="ECO:0007669"/>
    <property type="project" value="UniProtKB-KW"/>
</dbReference>
<dbReference type="GO" id="GO:0016887">
    <property type="term" value="F:ATP hydrolysis activity"/>
    <property type="evidence" value="ECO:0007669"/>
    <property type="project" value="InterPro"/>
</dbReference>
<dbReference type="CDD" id="cd19507">
    <property type="entry name" value="RecA-like_Ycf46-like"/>
    <property type="match status" value="1"/>
</dbReference>
<dbReference type="Gene3D" id="1.10.8.60">
    <property type="match status" value="1"/>
</dbReference>
<dbReference type="Gene3D" id="3.40.50.300">
    <property type="entry name" value="P-loop containing nucleotide triphosphate hydrolases"/>
    <property type="match status" value="1"/>
</dbReference>
<dbReference type="InterPro" id="IPR003593">
    <property type="entry name" value="AAA+_ATPase"/>
</dbReference>
<dbReference type="InterPro" id="IPR052381">
    <property type="entry name" value="AAA_domain_protein"/>
</dbReference>
<dbReference type="InterPro" id="IPR003959">
    <property type="entry name" value="ATPase_AAA_core"/>
</dbReference>
<dbReference type="InterPro" id="IPR027417">
    <property type="entry name" value="P-loop_NTPase"/>
</dbReference>
<dbReference type="PANTHER" id="PTHR42960">
    <property type="entry name" value="YCF46 PROTEIN"/>
    <property type="match status" value="1"/>
</dbReference>
<dbReference type="PANTHER" id="PTHR42960:SF1">
    <property type="entry name" value="YCF46 PROTEIN"/>
    <property type="match status" value="1"/>
</dbReference>
<dbReference type="Pfam" id="PF00004">
    <property type="entry name" value="AAA"/>
    <property type="match status" value="1"/>
</dbReference>
<dbReference type="SMART" id="SM00382">
    <property type="entry name" value="AAA"/>
    <property type="match status" value="1"/>
</dbReference>
<dbReference type="SUPFAM" id="SSF52540">
    <property type="entry name" value="P-loop containing nucleoside triphosphate hydrolases"/>
    <property type="match status" value="1"/>
</dbReference>
<accession>P51189</accession>
<reference key="1">
    <citation type="journal article" date="1995" name="Plant Mol. Biol. Rep.">
        <title>Complete nucleotide sequence of the Porphyra purpurea chloroplast genome.</title>
        <authorList>
            <person name="Reith M.E."/>
            <person name="Munholland J."/>
        </authorList>
    </citation>
    <scope>NUCLEOTIDE SEQUENCE [LARGE SCALE GENOMIC DNA]</scope>
    <source>
        <strain>Avonport</strain>
    </source>
</reference>
<comment type="subcellular location">
    <subcellularLocation>
        <location>Plastid</location>
        <location>Chloroplast</location>
    </subcellularLocation>
</comment>
<comment type="similarity">
    <text evidence="2">Belongs to the AAA ATPase family. Highly divergent.</text>
</comment>
<name>YCF46_PORPU</name>
<protein>
    <recommendedName>
        <fullName>Uncharacterized AAA domain-containing protein ycf46</fullName>
    </recommendedName>
</protein>
<gene>
    <name type="primary">ycf46</name>
</gene>
<geneLocation type="chloroplast"/>
<feature type="chain" id="PRO_0000084804" description="Uncharacterized AAA domain-containing protein ycf46">
    <location>
        <begin position="1"/>
        <end position="491"/>
    </location>
</feature>
<feature type="binding site" evidence="1">
    <location>
        <begin position="266"/>
        <end position="273"/>
    </location>
    <ligand>
        <name>ATP</name>
        <dbReference type="ChEBI" id="CHEBI:30616"/>
    </ligand>
</feature>
<sequence>MNFIQDLRLLLKSRYPIILINTREEERLEYIIKNQLFCLDNEKVYCWDFVDGYTSNPNDNGYAKRNPLLALEFIEKLDTPYLNLFILKDFDSFFNDLGLIRKLRNLSQIIKTQSKNIIIVSCKVNIPYTLSDVITIVDLPLPNLSEIKKEITRLSIALGIVLDIELVNNLAKSCQGLSVERIRKTITKTIAQYGQLDSRSLPIIIEEKRQLINQTRLLEFYPYKKATEDIGGLDALKSWLKKRSRSFSKQSFNYGIPTPKGLLLVGIQGTGKSLTAKAIANDWTLPLLRLDIGKLFGGLVGESESRMREMVTIAEGLSPCVLWIDEIDKAFSNLYSQGDSGTSARVFGTFITWLSEKTTPVFVVATANTIQNLPSEMLRKGRFDEIFFLDLPNNEERELIFQIHLARIRPKSWQNYNIKQLSLLCNKFSGAEIEQAIVESMHTAFSEEREFSTEDIKIALEQFIPLAYTDKEQVESLQAWAGNGRARNASL</sequence>
<organism>
    <name type="scientific">Porphyra purpurea</name>
    <name type="common">Red seaweed</name>
    <name type="synonym">Ulva purpurea</name>
    <dbReference type="NCBI Taxonomy" id="2787"/>
    <lineage>
        <taxon>Eukaryota</taxon>
        <taxon>Rhodophyta</taxon>
        <taxon>Bangiophyceae</taxon>
        <taxon>Bangiales</taxon>
        <taxon>Bangiaceae</taxon>
        <taxon>Porphyra</taxon>
    </lineage>
</organism>
<keyword id="KW-0067">ATP-binding</keyword>
<keyword id="KW-0150">Chloroplast</keyword>
<keyword id="KW-0547">Nucleotide-binding</keyword>
<keyword id="KW-0934">Plastid</keyword>